<organism>
    <name type="scientific">Pediococcus pentosaceus (strain ATCC 25745 / CCUG 21536 / LMG 10740 / 183-1w)</name>
    <dbReference type="NCBI Taxonomy" id="278197"/>
    <lineage>
        <taxon>Bacteria</taxon>
        <taxon>Bacillati</taxon>
        <taxon>Bacillota</taxon>
        <taxon>Bacilli</taxon>
        <taxon>Lactobacillales</taxon>
        <taxon>Lactobacillaceae</taxon>
        <taxon>Pediococcus</taxon>
    </lineage>
</organism>
<reference key="1">
    <citation type="journal article" date="2006" name="Proc. Natl. Acad. Sci. U.S.A.">
        <title>Comparative genomics of the lactic acid bacteria.</title>
        <authorList>
            <person name="Makarova K.S."/>
            <person name="Slesarev A."/>
            <person name="Wolf Y.I."/>
            <person name="Sorokin A."/>
            <person name="Mirkin B."/>
            <person name="Koonin E.V."/>
            <person name="Pavlov A."/>
            <person name="Pavlova N."/>
            <person name="Karamychev V."/>
            <person name="Polouchine N."/>
            <person name="Shakhova V."/>
            <person name="Grigoriev I."/>
            <person name="Lou Y."/>
            <person name="Rohksar D."/>
            <person name="Lucas S."/>
            <person name="Huang K."/>
            <person name="Goodstein D.M."/>
            <person name="Hawkins T."/>
            <person name="Plengvidhya V."/>
            <person name="Welker D."/>
            <person name="Hughes J."/>
            <person name="Goh Y."/>
            <person name="Benson A."/>
            <person name="Baldwin K."/>
            <person name="Lee J.-H."/>
            <person name="Diaz-Muniz I."/>
            <person name="Dosti B."/>
            <person name="Smeianov V."/>
            <person name="Wechter W."/>
            <person name="Barabote R."/>
            <person name="Lorca G."/>
            <person name="Altermann E."/>
            <person name="Barrangou R."/>
            <person name="Ganesan B."/>
            <person name="Xie Y."/>
            <person name="Rawsthorne H."/>
            <person name="Tamir D."/>
            <person name="Parker C."/>
            <person name="Breidt F."/>
            <person name="Broadbent J.R."/>
            <person name="Hutkins R."/>
            <person name="O'Sullivan D."/>
            <person name="Steele J."/>
            <person name="Unlu G."/>
            <person name="Saier M.H. Jr."/>
            <person name="Klaenhammer T."/>
            <person name="Richardson P."/>
            <person name="Kozyavkin S."/>
            <person name="Weimer B.C."/>
            <person name="Mills D.A."/>
        </authorList>
    </citation>
    <scope>NUCLEOTIDE SEQUENCE [LARGE SCALE GENOMIC DNA]</scope>
    <source>
        <strain>ATCC 25745 / CCUG 21536 / LMG 10740 / 183-1w</strain>
    </source>
</reference>
<accession>Q03EQ6</accession>
<proteinExistence type="inferred from homology"/>
<dbReference type="EC" id="3.1.-.-" evidence="1"/>
<dbReference type="EMBL" id="CP000422">
    <property type="protein sequence ID" value="ABJ68316.1"/>
    <property type="molecule type" value="Genomic_DNA"/>
</dbReference>
<dbReference type="SMR" id="Q03EQ6"/>
<dbReference type="STRING" id="278197.PEPE_1275"/>
<dbReference type="GeneID" id="33061701"/>
<dbReference type="KEGG" id="ppe:PEPE_1275"/>
<dbReference type="eggNOG" id="COG1418">
    <property type="taxonomic scope" value="Bacteria"/>
</dbReference>
<dbReference type="HOGENOM" id="CLU_028328_1_0_9"/>
<dbReference type="OrthoDB" id="9803205at2"/>
<dbReference type="Proteomes" id="UP000000773">
    <property type="component" value="Chromosome"/>
</dbReference>
<dbReference type="GO" id="GO:0005886">
    <property type="term" value="C:plasma membrane"/>
    <property type="evidence" value="ECO:0007669"/>
    <property type="project" value="UniProtKB-SubCell"/>
</dbReference>
<dbReference type="GO" id="GO:0003723">
    <property type="term" value="F:RNA binding"/>
    <property type="evidence" value="ECO:0007669"/>
    <property type="project" value="UniProtKB-UniRule"/>
</dbReference>
<dbReference type="GO" id="GO:0004521">
    <property type="term" value="F:RNA endonuclease activity"/>
    <property type="evidence" value="ECO:0007669"/>
    <property type="project" value="UniProtKB-UniRule"/>
</dbReference>
<dbReference type="GO" id="GO:0006402">
    <property type="term" value="P:mRNA catabolic process"/>
    <property type="evidence" value="ECO:0007669"/>
    <property type="project" value="UniProtKB-UniRule"/>
</dbReference>
<dbReference type="CDD" id="cd00077">
    <property type="entry name" value="HDc"/>
    <property type="match status" value="1"/>
</dbReference>
<dbReference type="CDD" id="cd22431">
    <property type="entry name" value="KH-I_RNaseY"/>
    <property type="match status" value="1"/>
</dbReference>
<dbReference type="FunFam" id="1.10.3210.10:FF:000013">
    <property type="entry name" value="Ribonuclease Y"/>
    <property type="match status" value="1"/>
</dbReference>
<dbReference type="FunFam" id="3.30.1370.10:FF:000006">
    <property type="entry name" value="Ribonuclease Y"/>
    <property type="match status" value="1"/>
</dbReference>
<dbReference type="Gene3D" id="3.30.310.210">
    <property type="match status" value="1"/>
</dbReference>
<dbReference type="Gene3D" id="1.10.3210.10">
    <property type="entry name" value="Hypothetical protein af1432"/>
    <property type="match status" value="1"/>
</dbReference>
<dbReference type="HAMAP" id="MF_00335">
    <property type="entry name" value="RNase_Y"/>
    <property type="match status" value="1"/>
</dbReference>
<dbReference type="InterPro" id="IPR003607">
    <property type="entry name" value="HD/PDEase_dom"/>
</dbReference>
<dbReference type="InterPro" id="IPR006674">
    <property type="entry name" value="HD_domain"/>
</dbReference>
<dbReference type="InterPro" id="IPR006675">
    <property type="entry name" value="HDIG_dom"/>
</dbReference>
<dbReference type="InterPro" id="IPR004087">
    <property type="entry name" value="KH_dom"/>
</dbReference>
<dbReference type="InterPro" id="IPR004088">
    <property type="entry name" value="KH_dom_type_1"/>
</dbReference>
<dbReference type="InterPro" id="IPR036612">
    <property type="entry name" value="KH_dom_type_1_sf"/>
</dbReference>
<dbReference type="InterPro" id="IPR017705">
    <property type="entry name" value="Ribonuclease_Y"/>
</dbReference>
<dbReference type="InterPro" id="IPR022711">
    <property type="entry name" value="RNase_Y_N"/>
</dbReference>
<dbReference type="NCBIfam" id="TIGR00277">
    <property type="entry name" value="HDIG"/>
    <property type="match status" value="1"/>
</dbReference>
<dbReference type="NCBIfam" id="TIGR03319">
    <property type="entry name" value="RNase_Y"/>
    <property type="match status" value="1"/>
</dbReference>
<dbReference type="PANTHER" id="PTHR12826">
    <property type="entry name" value="RIBONUCLEASE Y"/>
    <property type="match status" value="1"/>
</dbReference>
<dbReference type="PANTHER" id="PTHR12826:SF15">
    <property type="entry name" value="RIBONUCLEASE Y"/>
    <property type="match status" value="1"/>
</dbReference>
<dbReference type="Pfam" id="PF01966">
    <property type="entry name" value="HD"/>
    <property type="match status" value="1"/>
</dbReference>
<dbReference type="Pfam" id="PF00013">
    <property type="entry name" value="KH_1"/>
    <property type="match status" value="1"/>
</dbReference>
<dbReference type="Pfam" id="PF12072">
    <property type="entry name" value="RNase_Y_N"/>
    <property type="match status" value="1"/>
</dbReference>
<dbReference type="SMART" id="SM00471">
    <property type="entry name" value="HDc"/>
    <property type="match status" value="1"/>
</dbReference>
<dbReference type="SMART" id="SM00322">
    <property type="entry name" value="KH"/>
    <property type="match status" value="1"/>
</dbReference>
<dbReference type="SUPFAM" id="SSF54791">
    <property type="entry name" value="Eukaryotic type KH-domain (KH-domain type I)"/>
    <property type="match status" value="1"/>
</dbReference>
<dbReference type="SUPFAM" id="SSF109604">
    <property type="entry name" value="HD-domain/PDEase-like"/>
    <property type="match status" value="1"/>
</dbReference>
<dbReference type="PROSITE" id="PS51831">
    <property type="entry name" value="HD"/>
    <property type="match status" value="1"/>
</dbReference>
<dbReference type="PROSITE" id="PS50084">
    <property type="entry name" value="KH_TYPE_1"/>
    <property type="match status" value="1"/>
</dbReference>
<protein>
    <recommendedName>
        <fullName evidence="1">Ribonuclease Y 1</fullName>
        <shortName evidence="1">RNase Y 1</shortName>
        <ecNumber evidence="1">3.1.-.-</ecNumber>
    </recommendedName>
</protein>
<name>RNY1_PEDPA</name>
<gene>
    <name evidence="1" type="primary">rny1</name>
    <name type="ordered locus">PEPE_1275</name>
</gene>
<evidence type="ECO:0000255" key="1">
    <source>
        <dbReference type="HAMAP-Rule" id="MF_00335"/>
    </source>
</evidence>
<evidence type="ECO:0000255" key="2">
    <source>
        <dbReference type="PROSITE-ProRule" id="PRU01175"/>
    </source>
</evidence>
<evidence type="ECO:0000256" key="3">
    <source>
        <dbReference type="SAM" id="MobiDB-lite"/>
    </source>
</evidence>
<sequence length="519" mass="58362">MIILYIILAIIAIVVGYCAGFFMHKRLIEKQTANASNSADVIVENARKQAETERREKLLEAKDESHRYRAKVEKELKERRAELQKQEDRLLQREDSLDRKDNSFEKRENSLERKEQKLALDQKHIDEQQQKASSLVEERQQELERVSNLTQEDAKNLIISETEAKLEKERALIIKEGLEDAEAEADQTARKLIAEAIQRSAADMASETTITVVSLPNDDMKGRIIGREGRNIRNFQNVTGVDLIIDDTPEAVVLSSFDPIRREIARIALDKLIQDGRIHPARIEEMVEKAKKEMDDNIRKTGEQAVFDLGIHSMNPELIKLIGQLKYRTSYGQNVLNHSIEVANLAGVLAAELGEDVTVAKRAGLLHDIGKAVQHETDTSHAQLGVELAKKYKESATVINAIAAHHDGVEAQHVISVLVAAANSISAARPGARSDTLQSYIHRLEKLEQISNNFDGVKKSYAIQAGREVRVIVKPNKINDLKAVMLTHNIRKAIEKELEYAGKVKVTVVREVRAVDYAK</sequence>
<feature type="chain" id="PRO_0000344916" description="Ribonuclease Y 1">
    <location>
        <begin position="1"/>
        <end position="519"/>
    </location>
</feature>
<feature type="transmembrane region" description="Helical" evidence="1">
    <location>
        <begin position="2"/>
        <end position="22"/>
    </location>
</feature>
<feature type="domain" description="KH" evidence="1">
    <location>
        <begin position="209"/>
        <end position="294"/>
    </location>
</feature>
<feature type="domain" description="HD" evidence="2">
    <location>
        <begin position="335"/>
        <end position="428"/>
    </location>
</feature>
<feature type="region of interest" description="Disordered" evidence="3">
    <location>
        <begin position="84"/>
        <end position="113"/>
    </location>
</feature>
<keyword id="KW-1003">Cell membrane</keyword>
<keyword id="KW-0255">Endonuclease</keyword>
<keyword id="KW-0378">Hydrolase</keyword>
<keyword id="KW-0472">Membrane</keyword>
<keyword id="KW-0540">Nuclease</keyword>
<keyword id="KW-0694">RNA-binding</keyword>
<keyword id="KW-0812">Transmembrane</keyword>
<keyword id="KW-1133">Transmembrane helix</keyword>
<comment type="function">
    <text evidence="1">Endoribonuclease that initiates mRNA decay.</text>
</comment>
<comment type="subcellular location">
    <subcellularLocation>
        <location evidence="1">Cell membrane</location>
        <topology evidence="1">Single-pass membrane protein</topology>
    </subcellularLocation>
</comment>
<comment type="similarity">
    <text evidence="1">Belongs to the RNase Y family.</text>
</comment>